<gene>
    <name evidence="2" type="primary">rpsL</name>
    <name type="ordered locus">Aasi_0127</name>
</gene>
<reference key="1">
    <citation type="journal article" date="2010" name="J. Bacteriol.">
        <title>The genome of the amoeba symbiont 'Candidatus Amoebophilus asiaticus' reveals common mechanisms for host cell interaction among amoeba-associated bacteria.</title>
        <authorList>
            <person name="Schmitz-Esser S."/>
            <person name="Tischler P."/>
            <person name="Arnold R."/>
            <person name="Montanaro J."/>
            <person name="Wagner M."/>
            <person name="Rattei T."/>
            <person name="Horn M."/>
        </authorList>
    </citation>
    <scope>NUCLEOTIDE SEQUENCE [LARGE SCALE GENOMIC DNA]</scope>
    <source>
        <strain>5a2</strain>
    </source>
</reference>
<feature type="chain" id="PRO_1000194114" description="Small ribosomal subunit protein uS12">
    <location>
        <begin position="1"/>
        <end position="135"/>
    </location>
</feature>
<feature type="region of interest" description="Disordered" evidence="3">
    <location>
        <begin position="114"/>
        <end position="135"/>
    </location>
</feature>
<feature type="compositionally biased region" description="Low complexity" evidence="3">
    <location>
        <begin position="124"/>
        <end position="135"/>
    </location>
</feature>
<feature type="modified residue" description="3-methylthioaspartic acid" evidence="1">
    <location>
        <position position="89"/>
    </location>
</feature>
<keyword id="KW-0488">Methylation</keyword>
<keyword id="KW-1185">Reference proteome</keyword>
<keyword id="KW-0687">Ribonucleoprotein</keyword>
<keyword id="KW-0689">Ribosomal protein</keyword>
<keyword id="KW-0694">RNA-binding</keyword>
<keyword id="KW-0699">rRNA-binding</keyword>
<keyword id="KW-0820">tRNA-binding</keyword>
<dbReference type="EMBL" id="CP001102">
    <property type="protein sequence ID" value="ACE05574.1"/>
    <property type="molecule type" value="Genomic_DNA"/>
</dbReference>
<dbReference type="RefSeq" id="WP_012472345.1">
    <property type="nucleotide sequence ID" value="NC_010830.1"/>
</dbReference>
<dbReference type="SMR" id="B3EUF5"/>
<dbReference type="STRING" id="452471.Aasi_0127"/>
<dbReference type="KEGG" id="aas:Aasi_0127"/>
<dbReference type="eggNOG" id="COG0048">
    <property type="taxonomic scope" value="Bacteria"/>
</dbReference>
<dbReference type="HOGENOM" id="CLU_104295_1_2_10"/>
<dbReference type="OrthoDB" id="9802366at2"/>
<dbReference type="Proteomes" id="UP000001227">
    <property type="component" value="Chromosome"/>
</dbReference>
<dbReference type="GO" id="GO:0015935">
    <property type="term" value="C:small ribosomal subunit"/>
    <property type="evidence" value="ECO:0007669"/>
    <property type="project" value="InterPro"/>
</dbReference>
<dbReference type="GO" id="GO:0019843">
    <property type="term" value="F:rRNA binding"/>
    <property type="evidence" value="ECO:0007669"/>
    <property type="project" value="UniProtKB-UniRule"/>
</dbReference>
<dbReference type="GO" id="GO:0003735">
    <property type="term" value="F:structural constituent of ribosome"/>
    <property type="evidence" value="ECO:0007669"/>
    <property type="project" value="InterPro"/>
</dbReference>
<dbReference type="GO" id="GO:0000049">
    <property type="term" value="F:tRNA binding"/>
    <property type="evidence" value="ECO:0007669"/>
    <property type="project" value="UniProtKB-UniRule"/>
</dbReference>
<dbReference type="GO" id="GO:0006412">
    <property type="term" value="P:translation"/>
    <property type="evidence" value="ECO:0007669"/>
    <property type="project" value="UniProtKB-UniRule"/>
</dbReference>
<dbReference type="CDD" id="cd03368">
    <property type="entry name" value="Ribosomal_S12"/>
    <property type="match status" value="1"/>
</dbReference>
<dbReference type="FunFam" id="2.40.50.140:FF:000099">
    <property type="entry name" value="Ribosomal protein S12, mitochondrial"/>
    <property type="match status" value="1"/>
</dbReference>
<dbReference type="Gene3D" id="2.40.50.140">
    <property type="entry name" value="Nucleic acid-binding proteins"/>
    <property type="match status" value="1"/>
</dbReference>
<dbReference type="HAMAP" id="MF_00403_B">
    <property type="entry name" value="Ribosomal_uS12_B"/>
    <property type="match status" value="1"/>
</dbReference>
<dbReference type="InterPro" id="IPR012340">
    <property type="entry name" value="NA-bd_OB-fold"/>
</dbReference>
<dbReference type="InterPro" id="IPR006032">
    <property type="entry name" value="Ribosomal_uS12"/>
</dbReference>
<dbReference type="InterPro" id="IPR005679">
    <property type="entry name" value="Ribosomal_uS12_bac"/>
</dbReference>
<dbReference type="NCBIfam" id="TIGR00981">
    <property type="entry name" value="rpsL_bact"/>
    <property type="match status" value="1"/>
</dbReference>
<dbReference type="PANTHER" id="PTHR11652">
    <property type="entry name" value="30S RIBOSOMAL PROTEIN S12 FAMILY MEMBER"/>
    <property type="match status" value="1"/>
</dbReference>
<dbReference type="Pfam" id="PF00164">
    <property type="entry name" value="Ribosom_S12_S23"/>
    <property type="match status" value="1"/>
</dbReference>
<dbReference type="PIRSF" id="PIRSF002133">
    <property type="entry name" value="Ribosomal_S12/S23"/>
    <property type="match status" value="1"/>
</dbReference>
<dbReference type="PRINTS" id="PR01034">
    <property type="entry name" value="RIBOSOMALS12"/>
</dbReference>
<dbReference type="SUPFAM" id="SSF50249">
    <property type="entry name" value="Nucleic acid-binding proteins"/>
    <property type="match status" value="1"/>
</dbReference>
<evidence type="ECO:0000250" key="1"/>
<evidence type="ECO:0000255" key="2">
    <source>
        <dbReference type="HAMAP-Rule" id="MF_00403"/>
    </source>
</evidence>
<evidence type="ECO:0000256" key="3">
    <source>
        <dbReference type="SAM" id="MobiDB-lite"/>
    </source>
</evidence>
<evidence type="ECO:0000305" key="4"/>
<protein>
    <recommendedName>
        <fullName evidence="2">Small ribosomal subunit protein uS12</fullName>
    </recommendedName>
    <alternativeName>
        <fullName evidence="4">30S ribosomal protein S12</fullName>
    </alternativeName>
</protein>
<sequence>MATIQQLIRKGRKKIKYNSKSPALGGCPQRRGICTKVTTMKPRKPNSSMKKVAKVRLSNGKEVNVYIPGEGHNLQEHSAVLIQGGGVNDLPGINYRIIRGTLDTAGVNGRIQSRSRYGAKKGAAKQAAAAKSKKK</sequence>
<proteinExistence type="inferred from homology"/>
<accession>B3EUF5</accession>
<comment type="function">
    <text evidence="2">With S4 and S5 plays an important role in translational accuracy.</text>
</comment>
<comment type="function">
    <text evidence="2">Interacts with and stabilizes bases of the 16S rRNA that are involved in tRNA selection in the A site and with the mRNA backbone. Located at the interface of the 30S and 50S subunits, it traverses the body of the 30S subunit contacting proteins on the other side and probably holding the rRNA structure together. The combined cluster of proteins S8, S12 and S17 appears to hold together the shoulder and platform of the 30S subunit.</text>
</comment>
<comment type="subunit">
    <text evidence="2">Part of the 30S ribosomal subunit. Contacts proteins S8 and S17. May interact with IF1 in the 30S initiation complex.</text>
</comment>
<comment type="similarity">
    <text evidence="2">Belongs to the universal ribosomal protein uS12 family.</text>
</comment>
<name>RS12_AMOA5</name>
<organism>
    <name type="scientific">Amoebophilus asiaticus (strain 5a2)</name>
    <dbReference type="NCBI Taxonomy" id="452471"/>
    <lineage>
        <taxon>Bacteria</taxon>
        <taxon>Pseudomonadati</taxon>
        <taxon>Bacteroidota</taxon>
        <taxon>Cytophagia</taxon>
        <taxon>Cytophagales</taxon>
        <taxon>Amoebophilaceae</taxon>
        <taxon>Candidatus Amoebophilus</taxon>
    </lineage>
</organism>